<organism>
    <name type="scientific">Saccharomyces cerevisiae (strain ATCC 204508 / S288c)</name>
    <name type="common">Baker's yeast</name>
    <dbReference type="NCBI Taxonomy" id="559292"/>
    <lineage>
        <taxon>Eukaryota</taxon>
        <taxon>Fungi</taxon>
        <taxon>Dikarya</taxon>
        <taxon>Ascomycota</taxon>
        <taxon>Saccharomycotina</taxon>
        <taxon>Saccharomycetes</taxon>
        <taxon>Saccharomycetales</taxon>
        <taxon>Saccharomycetaceae</taxon>
        <taxon>Saccharomyces</taxon>
    </lineage>
</organism>
<accession>Q99383</accession>
<accession>D6W1U5</accession>
<accession>Q02741</accession>
<evidence type="ECO:0000255" key="1">
    <source>
        <dbReference type="PROSITE-ProRule" id="PRU00176"/>
    </source>
</evidence>
<evidence type="ECO:0000256" key="2">
    <source>
        <dbReference type="SAM" id="MobiDB-lite"/>
    </source>
</evidence>
<evidence type="ECO:0000269" key="3">
    <source>
    </source>
</evidence>
<evidence type="ECO:0000269" key="4">
    <source>
    </source>
</evidence>
<evidence type="ECO:0000269" key="5">
    <source>
    </source>
</evidence>
<evidence type="ECO:0000269" key="6">
    <source>
    </source>
</evidence>
<evidence type="ECO:0000269" key="7">
    <source>
    </source>
</evidence>
<evidence type="ECO:0000269" key="8">
    <source>
    </source>
</evidence>
<evidence type="ECO:0000269" key="9">
    <source>
    </source>
</evidence>
<evidence type="ECO:0000269" key="10">
    <source>
    </source>
</evidence>
<evidence type="ECO:0000269" key="11">
    <source>
    </source>
</evidence>
<evidence type="ECO:0000303" key="12">
    <source>
    </source>
</evidence>
<evidence type="ECO:0000305" key="13"/>
<evidence type="ECO:0007744" key="14">
    <source>
    </source>
</evidence>
<evidence type="ECO:0007744" key="15">
    <source>
    </source>
</evidence>
<evidence type="ECO:0007744" key="16">
    <source>
    </source>
</evidence>
<evidence type="ECO:0007829" key="17">
    <source>
        <dbReference type="PDB" id="2CJK"/>
    </source>
</evidence>
<evidence type="ECO:0007829" key="18">
    <source>
        <dbReference type="PDB" id="2KM8"/>
    </source>
</evidence>
<proteinExistence type="evidence at protein level"/>
<name>HRP1_YEAST</name>
<feature type="chain" id="PRO_0000081658" description="Nuclear polyadenylated RNA-binding protein 4">
    <location>
        <begin position="1"/>
        <end position="534"/>
    </location>
</feature>
<feature type="domain" description="RRM 1" evidence="1">
    <location>
        <begin position="159"/>
        <end position="241"/>
    </location>
</feature>
<feature type="domain" description="RRM 2" evidence="1">
    <location>
        <begin position="243"/>
        <end position="320"/>
    </location>
</feature>
<feature type="region of interest" description="Disordered" evidence="2">
    <location>
        <begin position="1"/>
        <end position="154"/>
    </location>
</feature>
<feature type="region of interest" description="Disordered" evidence="2">
    <location>
        <begin position="316"/>
        <end position="354"/>
    </location>
</feature>
<feature type="region of interest" description="Disordered" evidence="2">
    <location>
        <begin position="415"/>
        <end position="534"/>
    </location>
</feature>
<feature type="compositionally biased region" description="Basic and acidic residues" evidence="2">
    <location>
        <begin position="13"/>
        <end position="30"/>
    </location>
</feature>
<feature type="compositionally biased region" description="Low complexity" evidence="2">
    <location>
        <begin position="37"/>
        <end position="78"/>
    </location>
</feature>
<feature type="compositionally biased region" description="Basic and acidic residues" evidence="2">
    <location>
        <begin position="81"/>
        <end position="98"/>
    </location>
</feature>
<feature type="compositionally biased region" description="Low complexity" evidence="2">
    <location>
        <begin position="99"/>
        <end position="112"/>
    </location>
</feature>
<feature type="compositionally biased region" description="Low complexity" evidence="2">
    <location>
        <begin position="121"/>
        <end position="144"/>
    </location>
</feature>
<feature type="compositionally biased region" description="Basic and acidic residues" evidence="2">
    <location>
        <begin position="145"/>
        <end position="154"/>
    </location>
</feature>
<feature type="compositionally biased region" description="Low complexity" evidence="2">
    <location>
        <begin position="336"/>
        <end position="354"/>
    </location>
</feature>
<feature type="compositionally biased region" description="Polar residues" evidence="2">
    <location>
        <begin position="420"/>
        <end position="459"/>
    </location>
</feature>
<feature type="compositionally biased region" description="Low complexity" evidence="2">
    <location>
        <begin position="460"/>
        <end position="475"/>
    </location>
</feature>
<feature type="compositionally biased region" description="Basic and acidic residues" evidence="2">
    <location>
        <begin position="478"/>
        <end position="505"/>
    </location>
</feature>
<feature type="compositionally biased region" description="Low complexity" evidence="2">
    <location>
        <begin position="523"/>
        <end position="534"/>
    </location>
</feature>
<feature type="modified residue" description="Phosphoserine" evidence="8 14 15 16">
    <location>
        <position position="2"/>
    </location>
</feature>
<feature type="modified residue" description="Phosphoserine" evidence="8 14 15 16">
    <location>
        <position position="3"/>
    </location>
</feature>
<feature type="modified residue" description="Phosphoserine" evidence="8">
    <location>
        <position position="51"/>
    </location>
</feature>
<feature type="modified residue" description="Phosphoserine" evidence="8">
    <location>
        <position position="87"/>
    </location>
</feature>
<feature type="modified residue" description="Phosphoserine" evidence="15">
    <location>
        <position position="206"/>
    </location>
</feature>
<feature type="modified residue" description="Phosphothreonine" evidence="15">
    <location>
        <position position="458"/>
    </location>
</feature>
<feature type="modified residue" description="Phosphoserine" evidence="8">
    <location>
        <position position="460"/>
    </location>
</feature>
<feature type="modified residue" description="Phosphoserine" evidence="8 15 16">
    <location>
        <position position="462"/>
    </location>
</feature>
<feature type="modified residue" description="Omega-N-methylarginine" evidence="8">
    <location>
        <position position="519"/>
    </location>
</feature>
<feature type="helix" evidence="17">
    <location>
        <begin position="157"/>
        <end position="159"/>
    </location>
</feature>
<feature type="strand" evidence="17">
    <location>
        <begin position="160"/>
        <end position="163"/>
    </location>
</feature>
<feature type="helix" evidence="17">
    <location>
        <begin position="172"/>
        <end position="179"/>
    </location>
</feature>
<feature type="turn" evidence="17">
    <location>
        <begin position="180"/>
        <end position="182"/>
    </location>
</feature>
<feature type="strand" evidence="17">
    <location>
        <begin position="185"/>
        <end position="189"/>
    </location>
</feature>
<feature type="turn" evidence="17">
    <location>
        <begin position="194"/>
        <end position="196"/>
    </location>
</feature>
<feature type="strand" evidence="17">
    <location>
        <begin position="203"/>
        <end position="209"/>
    </location>
</feature>
<feature type="helix" evidence="17">
    <location>
        <begin position="211"/>
        <end position="218"/>
    </location>
</feature>
<feature type="strand" evidence="18">
    <location>
        <begin position="223"/>
        <end position="226"/>
    </location>
</feature>
<feature type="helix" evidence="17">
    <location>
        <begin position="236"/>
        <end position="241"/>
    </location>
</feature>
<feature type="strand" evidence="17">
    <location>
        <begin position="243"/>
        <end position="250"/>
    </location>
</feature>
<feature type="helix" evidence="17">
    <location>
        <begin position="256"/>
        <end position="264"/>
    </location>
</feature>
<feature type="strand" evidence="18">
    <location>
        <begin position="265"/>
        <end position="267"/>
    </location>
</feature>
<feature type="strand" evidence="17">
    <location>
        <begin position="270"/>
        <end position="273"/>
    </location>
</feature>
<feature type="strand" evidence="17">
    <location>
        <begin position="277"/>
        <end position="281"/>
    </location>
</feature>
<feature type="strand" evidence="17">
    <location>
        <begin position="284"/>
        <end position="293"/>
    </location>
</feature>
<feature type="helix" evidence="17">
    <location>
        <begin position="294"/>
        <end position="302"/>
    </location>
</feature>
<feature type="strand" evidence="17">
    <location>
        <begin position="304"/>
        <end position="306"/>
    </location>
</feature>
<feature type="strand" evidence="17">
    <location>
        <begin position="308"/>
        <end position="311"/>
    </location>
</feature>
<feature type="strand" evidence="17">
    <location>
        <begin position="313"/>
        <end position="317"/>
    </location>
</feature>
<sequence length="534" mass="59650">MSSDEEDFNDIYGDDKPTTTEEVKKEEEQNKAGSGTSQLDQLAALQALSSSLNKLNNPNSNNSSSNNSNQDTSSSKQDGTANDKEGSNEDTKNEKKQESATSANANANASSAGPSGLPWEQLQQTMSQFQQPSSQSPPQQQVTQTKEERSKADLSKESCKMFIGGLNWDTTEDNLREYFGKYGTVTDLKIMKDPATGRSRGFGFLSFEKPSSVDEVVKTQHILDGKVIDPKRAIPRDEQDKTGKIFVGGIGPDVRPKEFEEFFSQWGTIIDAQLMLDKDTGQSRGFGFVTYDSADAVDRVCQNKFIDFKDRKIEIKRAEPRHMQQKSSNNGGNNGGNNMNRRGGNFGNQGDFNQMYQNPMMGGYNPMMNPQAMTDYYQKMQEYYQQMQKQTGMDYTQMYQQQMQQMAMMMPGFAMPPNAMTLNQPQQDSNATQGSPAPSDSDNNKSNDVQTIGNTSNTDSGSPPLNLPNGPKGPSQYNDDHNSGYGYNRDRGDRDRNDRDRDYNHRSGGNHRRNGRGGRGGYNRRNNGYHPYNR</sequence>
<gene>
    <name evidence="12" type="primary">HRP1</name>
    <name type="synonym">NAB4</name>
    <name type="synonym">NAB5</name>
    <name type="ordered locus">YOL123W</name>
</gene>
<keyword id="KW-0002">3D-structure</keyword>
<keyword id="KW-0963">Cytoplasm</keyword>
<keyword id="KW-0903">Direct protein sequencing</keyword>
<keyword id="KW-0488">Methylation</keyword>
<keyword id="KW-0507">mRNA processing</keyword>
<keyword id="KW-0866">Nonsense-mediated mRNA decay</keyword>
<keyword id="KW-0539">Nucleus</keyword>
<keyword id="KW-0597">Phosphoprotein</keyword>
<keyword id="KW-1185">Reference proteome</keyword>
<keyword id="KW-0677">Repeat</keyword>
<keyword id="KW-0694">RNA-binding</keyword>
<dbReference type="EMBL" id="U35737">
    <property type="protein sequence ID" value="AAA79097.1"/>
    <property type="molecule type" value="Genomic_DNA"/>
</dbReference>
<dbReference type="EMBL" id="U38535">
    <property type="protein sequence ID" value="AAB18142.1"/>
    <property type="molecule type" value="Genomic_DNA"/>
</dbReference>
<dbReference type="EMBL" id="X95258">
    <property type="protein sequence ID" value="CAA64546.1"/>
    <property type="molecule type" value="Genomic_DNA"/>
</dbReference>
<dbReference type="EMBL" id="Z74865">
    <property type="protein sequence ID" value="CAA99142.1"/>
    <property type="molecule type" value="Genomic_DNA"/>
</dbReference>
<dbReference type="EMBL" id="BK006948">
    <property type="protein sequence ID" value="DAA10661.1"/>
    <property type="molecule type" value="Genomic_DNA"/>
</dbReference>
<dbReference type="PIR" id="S66820">
    <property type="entry name" value="S66820"/>
</dbReference>
<dbReference type="RefSeq" id="NP_014518.1">
    <property type="nucleotide sequence ID" value="NM_001183377.1"/>
</dbReference>
<dbReference type="PDB" id="2CJK">
    <property type="method" value="NMR"/>
    <property type="chains" value="A=156-322"/>
</dbReference>
<dbReference type="PDB" id="2KM8">
    <property type="method" value="NMR"/>
    <property type="chains" value="C=156-322"/>
</dbReference>
<dbReference type="PDBsum" id="2CJK"/>
<dbReference type="PDBsum" id="2KM8"/>
<dbReference type="BMRB" id="Q99383"/>
<dbReference type="SMR" id="Q99383"/>
<dbReference type="BioGRID" id="34252">
    <property type="interactions" value="354"/>
</dbReference>
<dbReference type="ComplexPortal" id="CPX-1896">
    <property type="entry name" value="mRNA cleavage factor complex CFI"/>
</dbReference>
<dbReference type="DIP" id="DIP-1371N"/>
<dbReference type="FunCoup" id="Q99383">
    <property type="interactions" value="424"/>
</dbReference>
<dbReference type="IntAct" id="Q99383">
    <property type="interactions" value="40"/>
</dbReference>
<dbReference type="MINT" id="Q99383"/>
<dbReference type="STRING" id="4932.YOL123W"/>
<dbReference type="iPTMnet" id="Q99383"/>
<dbReference type="PaxDb" id="4932-YOL123W"/>
<dbReference type="PeptideAtlas" id="Q99383"/>
<dbReference type="EnsemblFungi" id="YOL123W_mRNA">
    <property type="protein sequence ID" value="YOL123W"/>
    <property type="gene ID" value="YOL123W"/>
</dbReference>
<dbReference type="GeneID" id="853997"/>
<dbReference type="KEGG" id="sce:YOL123W"/>
<dbReference type="AGR" id="SGD:S000005483"/>
<dbReference type="SGD" id="S000005483">
    <property type="gene designation" value="HRP1"/>
</dbReference>
<dbReference type="VEuPathDB" id="FungiDB:YOL123W"/>
<dbReference type="eggNOG" id="KOG4205">
    <property type="taxonomic scope" value="Eukaryota"/>
</dbReference>
<dbReference type="GeneTree" id="ENSGT00940000175437"/>
<dbReference type="HOGENOM" id="CLU_012062_0_2_1"/>
<dbReference type="InParanoid" id="Q99383"/>
<dbReference type="OMA" id="RVCQNKF"/>
<dbReference type="OrthoDB" id="1875751at2759"/>
<dbReference type="BioCyc" id="YEAST:G3O-33519-MONOMER"/>
<dbReference type="BioGRID-ORCS" id="853997">
    <property type="hits" value="0 hits in 10 CRISPR screens"/>
</dbReference>
<dbReference type="CD-CODE" id="A777E0F8">
    <property type="entry name" value="P-body"/>
</dbReference>
<dbReference type="CD-CODE" id="E03F929F">
    <property type="entry name" value="Stress granule"/>
</dbReference>
<dbReference type="EvolutionaryTrace" id="Q99383"/>
<dbReference type="PRO" id="PR:Q99383"/>
<dbReference type="Proteomes" id="UP000002311">
    <property type="component" value="Chromosome XV"/>
</dbReference>
<dbReference type="RNAct" id="Q99383">
    <property type="molecule type" value="protein"/>
</dbReference>
<dbReference type="GO" id="GO:0005737">
    <property type="term" value="C:cytoplasm"/>
    <property type="evidence" value="ECO:0000314"/>
    <property type="project" value="SGD"/>
</dbReference>
<dbReference type="GO" id="GO:0010494">
    <property type="term" value="C:cytoplasmic stress granule"/>
    <property type="evidence" value="ECO:0000314"/>
    <property type="project" value="SGD"/>
</dbReference>
<dbReference type="GO" id="GO:0005849">
    <property type="term" value="C:mRNA cleavage factor complex"/>
    <property type="evidence" value="ECO:0000353"/>
    <property type="project" value="ComplexPortal"/>
</dbReference>
<dbReference type="GO" id="GO:0005634">
    <property type="term" value="C:nucleus"/>
    <property type="evidence" value="ECO:0000314"/>
    <property type="project" value="SGD"/>
</dbReference>
<dbReference type="GO" id="GO:0003729">
    <property type="term" value="F:mRNA binding"/>
    <property type="evidence" value="ECO:0000314"/>
    <property type="project" value="SGD"/>
</dbReference>
<dbReference type="GO" id="GO:0003723">
    <property type="term" value="F:RNA binding"/>
    <property type="evidence" value="ECO:0000314"/>
    <property type="project" value="SGD"/>
</dbReference>
<dbReference type="GO" id="GO:0006397">
    <property type="term" value="P:mRNA processing"/>
    <property type="evidence" value="ECO:0000314"/>
    <property type="project" value="SGD"/>
</dbReference>
<dbReference type="GO" id="GO:0000184">
    <property type="term" value="P:nuclear-transcribed mRNA catabolic process, nonsense-mediated decay"/>
    <property type="evidence" value="ECO:0007669"/>
    <property type="project" value="UniProtKB-KW"/>
</dbReference>
<dbReference type="GO" id="GO:0072423">
    <property type="term" value="P:response to DNA damage checkpoint signaling"/>
    <property type="evidence" value="ECO:0000315"/>
    <property type="project" value="SGD"/>
</dbReference>
<dbReference type="CDD" id="cd12577">
    <property type="entry name" value="RRM1_Hrp1p"/>
    <property type="match status" value="1"/>
</dbReference>
<dbReference type="CDD" id="cd12330">
    <property type="entry name" value="RRM2_Hrp1p"/>
    <property type="match status" value="1"/>
</dbReference>
<dbReference type="FunFam" id="3.30.70.330:FF:000837">
    <property type="entry name" value="Hrp1p"/>
    <property type="match status" value="1"/>
</dbReference>
<dbReference type="FunFam" id="3.30.70.330:FF:000721">
    <property type="entry name" value="Nuclear polyadenylated RNA-binding protein 4"/>
    <property type="match status" value="1"/>
</dbReference>
<dbReference type="Gene3D" id="3.30.70.330">
    <property type="match status" value="2"/>
</dbReference>
<dbReference type="InterPro" id="IPR034156">
    <property type="entry name" value="Hrp1_RRM1"/>
</dbReference>
<dbReference type="InterPro" id="IPR012677">
    <property type="entry name" value="Nucleotide-bd_a/b_plait_sf"/>
</dbReference>
<dbReference type="InterPro" id="IPR035979">
    <property type="entry name" value="RBD_domain_sf"/>
</dbReference>
<dbReference type="InterPro" id="IPR000504">
    <property type="entry name" value="RRM_dom"/>
</dbReference>
<dbReference type="PANTHER" id="PTHR48032:SF6">
    <property type="entry name" value="RNA-BINDING (RRM_RBD_RNP MOTIFS) FAMILY PROTEIN"/>
    <property type="match status" value="1"/>
</dbReference>
<dbReference type="PANTHER" id="PTHR48032">
    <property type="entry name" value="RNA-BINDING PROTEIN MUSASHI HOMOLOG RBP6"/>
    <property type="match status" value="1"/>
</dbReference>
<dbReference type="Pfam" id="PF00076">
    <property type="entry name" value="RRM_1"/>
    <property type="match status" value="2"/>
</dbReference>
<dbReference type="SMART" id="SM00360">
    <property type="entry name" value="RRM"/>
    <property type="match status" value="2"/>
</dbReference>
<dbReference type="SUPFAM" id="SSF54928">
    <property type="entry name" value="RNA-binding domain, RBD"/>
    <property type="match status" value="2"/>
</dbReference>
<dbReference type="PROSITE" id="PS50102">
    <property type="entry name" value="RRM"/>
    <property type="match status" value="2"/>
</dbReference>
<comment type="function">
    <text evidence="4 5 9 11">RNA-binding protein, which is involved in the polyadenylation-dependent pre-mRNA 3'-end formation and cooperates with the cleavage factor CFIA complex and the cleavage and polyadenylation factor (CPF) complex. May be involved in regulation of poly(A) site selection. Is involved in nonsense-mediated mRNA decay. Seems to bind to an RNA downstream sequence element (DSE) located 3' of a nonsense codon and may mark the transcript for decay.</text>
</comment>
<comment type="subunit">
    <text evidence="4">Interacts with NAM7.</text>
</comment>
<comment type="interaction">
    <interactant intactId="EBI-11783">
        <id>Q99383</id>
    </interactant>
    <interactant intactId="EBI-9152">
        <id>P38217</id>
        <label>KAP104</label>
    </interactant>
    <organismsDiffer>false</organismsDiffer>
    <experiments>5</experiments>
</comment>
<comment type="interaction">
    <interactant intactId="EBI-11783">
        <id>Q99383</id>
    </interactant>
    <interactant intactId="EBI-15632">
        <id>P25298</id>
        <label>RNA14</label>
    </interactant>
    <organismsDiffer>false</organismsDiffer>
    <experiments>2</experiments>
</comment>
<comment type="subcellular location">
    <subcellularLocation>
        <location evidence="9 10">Cytoplasm</location>
    </subcellularLocation>
    <subcellularLocation>
        <location evidence="7 9 10">Nucleus</location>
    </subcellularLocation>
    <subcellularLocation>
        <location evidence="6">Cytoplasm</location>
        <location evidence="6">Stress granule</location>
    </subcellularLocation>
</comment>
<comment type="PTM">
    <text evidence="3 10">Methylated by HMT1 (PubMed:10024178, PubMed:9499403). The methylation is required for nuclear export (PubMed:9499403).</text>
</comment>
<protein>
    <recommendedName>
        <fullName evidence="13">Nuclear polyadenylated RNA-binding protein 4</fullName>
    </recommendedName>
    <alternativeName>
        <fullName>Cleavage factor IB</fullName>
        <shortName>CFIB</shortName>
    </alternativeName>
    <alternativeName>
        <fullName evidence="12">Heterogeneous nuclear ribonucleoprotein 1</fullName>
    </alternativeName>
</protein>
<reference key="1">
    <citation type="submission" date="1995-09" db="EMBL/GenBank/DDBJ databases">
        <authorList>
            <person name="Oberdorf A.M."/>
            <person name="Anderson J.T."/>
            <person name="Devore D.R."/>
            <person name="Swanson M.S."/>
        </authorList>
    </citation>
    <scope>NUCLEOTIDE SEQUENCE [GENOMIC DNA]</scope>
</reference>
<reference key="2">
    <citation type="journal article" date="1996" name="Genetics">
        <title>Potential RNA binding proteins in Saccharomyces cerevisiae identified as suppressors of temperature-sensitive mutations in NPL3.</title>
        <authorList>
            <person name="Henry M."/>
            <person name="Borland C.Z."/>
            <person name="Bossie M."/>
            <person name="Silver P.A."/>
        </authorList>
    </citation>
    <scope>NUCLEOTIDE SEQUENCE [GENOMIC DNA]</scope>
    <source>
        <strain>ATCC 204508 / S288c</strain>
    </source>
</reference>
<reference key="3">
    <citation type="journal article" date="1996" name="Yeast">
        <title>DNA sequence analysis of a 10 624 bp fragment of the left arm of chromosome XV from Saccharomyces cerevisiae reveals a RNA binding protein, a mitochondrial protein, two ribosomal proteins and two new open reading frames.</title>
        <authorList>
            <person name="Lafuente M.J."/>
            <person name="Gamo F.-J."/>
            <person name="Gancedo C."/>
        </authorList>
    </citation>
    <scope>NUCLEOTIDE SEQUENCE [GENOMIC DNA]</scope>
    <source>
        <strain>ATCC 96604 / S288c / FY1679</strain>
    </source>
</reference>
<reference key="4">
    <citation type="journal article" date="1997" name="Nature">
        <title>The nucleotide sequence of Saccharomyces cerevisiae chromosome XV.</title>
        <authorList>
            <person name="Dujon B."/>
            <person name="Albermann K."/>
            <person name="Aldea M."/>
            <person name="Alexandraki D."/>
            <person name="Ansorge W."/>
            <person name="Arino J."/>
            <person name="Benes V."/>
            <person name="Bohn C."/>
            <person name="Bolotin-Fukuhara M."/>
            <person name="Bordonne R."/>
            <person name="Boyer J."/>
            <person name="Camasses A."/>
            <person name="Casamayor A."/>
            <person name="Casas C."/>
            <person name="Cheret G."/>
            <person name="Cziepluch C."/>
            <person name="Daignan-Fornier B."/>
            <person name="Dang V.-D."/>
            <person name="de Haan M."/>
            <person name="Delius H."/>
            <person name="Durand P."/>
            <person name="Fairhead C."/>
            <person name="Feldmann H."/>
            <person name="Gaillon L."/>
            <person name="Galisson F."/>
            <person name="Gamo F.-J."/>
            <person name="Gancedo C."/>
            <person name="Goffeau A."/>
            <person name="Goulding S.E."/>
            <person name="Grivell L.A."/>
            <person name="Habbig B."/>
            <person name="Hand N.J."/>
            <person name="Hani J."/>
            <person name="Hattenhorst U."/>
            <person name="Hebling U."/>
            <person name="Hernando Y."/>
            <person name="Herrero E."/>
            <person name="Heumann K."/>
            <person name="Hiesel R."/>
            <person name="Hilger F."/>
            <person name="Hofmann B."/>
            <person name="Hollenberg C.P."/>
            <person name="Hughes B."/>
            <person name="Jauniaux J.-C."/>
            <person name="Kalogeropoulos A."/>
            <person name="Katsoulou C."/>
            <person name="Kordes E."/>
            <person name="Lafuente M.J."/>
            <person name="Landt O."/>
            <person name="Louis E.J."/>
            <person name="Maarse A.C."/>
            <person name="Madania A."/>
            <person name="Mannhaupt G."/>
            <person name="Marck C."/>
            <person name="Martin R.P."/>
            <person name="Mewes H.-W."/>
            <person name="Michaux G."/>
            <person name="Paces V."/>
            <person name="Parle-McDermott A.G."/>
            <person name="Pearson B.M."/>
            <person name="Perrin A."/>
            <person name="Pettersson B."/>
            <person name="Poch O."/>
            <person name="Pohl T.M."/>
            <person name="Poirey R."/>
            <person name="Portetelle D."/>
            <person name="Pujol A."/>
            <person name="Purnelle B."/>
            <person name="Ramezani Rad M."/>
            <person name="Rechmann S."/>
            <person name="Schwager C."/>
            <person name="Schweizer M."/>
            <person name="Sor F."/>
            <person name="Sterky F."/>
            <person name="Tarassov I.A."/>
            <person name="Teodoru C."/>
            <person name="Tettelin H."/>
            <person name="Thierry A."/>
            <person name="Tobiasch E."/>
            <person name="Tzermia M."/>
            <person name="Uhlen M."/>
            <person name="Unseld M."/>
            <person name="Valens M."/>
            <person name="Vandenbol M."/>
            <person name="Vetter I."/>
            <person name="Vlcek C."/>
            <person name="Voet M."/>
            <person name="Volckaert G."/>
            <person name="Voss H."/>
            <person name="Wambutt R."/>
            <person name="Wedler H."/>
            <person name="Wiemann S."/>
            <person name="Winsor B."/>
            <person name="Wolfe K.H."/>
            <person name="Zollner A."/>
            <person name="Zumstein E."/>
            <person name="Kleine K."/>
        </authorList>
    </citation>
    <scope>NUCLEOTIDE SEQUENCE [LARGE SCALE GENOMIC DNA]</scope>
    <source>
        <strain>ATCC 204508 / S288c</strain>
    </source>
</reference>
<reference key="5">
    <citation type="journal article" date="2014" name="G3 (Bethesda)">
        <title>The reference genome sequence of Saccharomyces cerevisiae: Then and now.</title>
        <authorList>
            <person name="Engel S.R."/>
            <person name="Dietrich F.S."/>
            <person name="Fisk D.G."/>
            <person name="Binkley G."/>
            <person name="Balakrishnan R."/>
            <person name="Costanzo M.C."/>
            <person name="Dwight S.S."/>
            <person name="Hitz B.C."/>
            <person name="Karra K."/>
            <person name="Nash R.S."/>
            <person name="Weng S."/>
            <person name="Wong E.D."/>
            <person name="Lloyd P."/>
            <person name="Skrzypek M.S."/>
            <person name="Miyasato S.R."/>
            <person name="Simison M."/>
            <person name="Cherry J.M."/>
        </authorList>
    </citation>
    <scope>GENOME REANNOTATION</scope>
    <source>
        <strain>ATCC 204508 / S288c</strain>
    </source>
</reference>
<reference key="6">
    <citation type="journal article" date="1997" name="Genes Dev.">
        <title>Hrp1, a sequence-specific RNA-binding protein that shuttles between the nucleus and the cytoplasm, is required for mRNA 3'-end formation in yeast.</title>
        <authorList>
            <person name="Kessler M.M."/>
            <person name="Henry M.F."/>
            <person name="Shen E."/>
            <person name="Zhao J."/>
            <person name="Gross S."/>
            <person name="Silver P.A."/>
            <person name="Moore C.L."/>
        </authorList>
    </citation>
    <scope>PROTEIN SEQUENCE OF 182-189 AND 245-257</scope>
    <scope>FUNCTION</scope>
    <scope>RNA-BINDING</scope>
    <scope>SUBCELLULAR LOCATION</scope>
</reference>
<reference key="7">
    <citation type="journal article" date="1998" name="EMBO J.">
        <title>Control of cleavage site selection during mRNA 3' end formation by a yeast hnRNP.</title>
        <authorList>
            <person name="Minvielle-Sebastia L."/>
            <person name="Beyer K."/>
            <person name="Krecic A.M."/>
            <person name="Hector R.E."/>
            <person name="Swanson M.S."/>
            <person name="Keller W."/>
        </authorList>
    </citation>
    <scope>FUNCTION</scope>
</reference>
<reference key="8">
    <citation type="journal article" date="1998" name="Genes Dev.">
        <title>Arginine methylation facilitates the nuclear export of hnRNP proteins.</title>
        <authorList>
            <person name="Shen E.C."/>
            <person name="Henry M.F."/>
            <person name="Weiss V.H."/>
            <person name="Valentini S.R."/>
            <person name="Silver P.A."/>
            <person name="Lee M.S."/>
        </authorList>
    </citation>
    <scope>SUBCELLULAR LOCATION</scope>
    <scope>METHYLATION BY HMT1</scope>
</reference>
<reference key="9">
    <citation type="journal article" date="1998" name="Nucleic Acids Res.">
        <title>A specific RNA-protein interaction at yeast polyadenylation efficiency elements.</title>
        <authorList>
            <person name="Chen S."/>
            <person name="Hyman L.E."/>
        </authorList>
    </citation>
    <scope>RNA-BINDING</scope>
</reference>
<reference key="10">
    <citation type="journal article" date="1999" name="RNA">
        <title>Arginine methylation and binding of Hrp1p to the efficiency element for mRNA 3'-end formation.</title>
        <authorList>
            <person name="Valentini S.R."/>
            <person name="Weiss V.H."/>
            <person name="Silver P.A."/>
        </authorList>
    </citation>
    <scope>METHYLATION BY HMT1</scope>
</reference>
<reference key="11">
    <citation type="journal article" date="2000" name="Mol. Cell">
        <title>The yeast hnRNP-like protein Hrp1/Nab4 marks a transcript for nonsense-mediated mRNA decay.</title>
        <authorList>
            <person name="Gonzalez C.I."/>
            <person name="Ruiz-Echevarria M.J."/>
            <person name="Vasudevan S."/>
            <person name="Henry M.F."/>
            <person name="Peltz S.W."/>
        </authorList>
    </citation>
    <scope>FUNCTION IN NMD</scope>
    <scope>INTERACTION WITH NAM7</scope>
</reference>
<reference key="12">
    <citation type="journal article" date="2001" name="Proc. Natl. Acad. Sci. U.S.A.">
        <title>Five subunits are required for reconstitution of the cleavage and polyadenylation activities of Saccharomyces cerevisiae cleavage factor I.</title>
        <authorList>
            <person name="Gross S."/>
            <person name="Moore C."/>
        </authorList>
    </citation>
    <scope>FUNCTION IN PRE-MRNA 3'-END FORMATION</scope>
</reference>
<reference key="13">
    <citation type="journal article" date="2002" name="Mol. Cell. Biol.">
        <title>Coupling of termination, 3' processing, and mRNA export.</title>
        <authorList>
            <person name="Hammell C.M."/>
            <person name="Gross S."/>
            <person name="Zenklusen D."/>
            <person name="Heath C.V."/>
            <person name="Stutz F."/>
            <person name="Moore C."/>
            <person name="Cole C.N."/>
        </authorList>
    </citation>
    <scope>SUBCELLULAR LOCATION</scope>
</reference>
<reference key="14">
    <citation type="journal article" date="2007" name="J. Proteome Res.">
        <title>Large-scale phosphorylation analysis of alpha-factor-arrested Saccharomyces cerevisiae.</title>
        <authorList>
            <person name="Li X."/>
            <person name="Gerber S.A."/>
            <person name="Rudner A.D."/>
            <person name="Beausoleil S.A."/>
            <person name="Haas W."/>
            <person name="Villen J."/>
            <person name="Elias J.E."/>
            <person name="Gygi S.P."/>
        </authorList>
    </citation>
    <scope>PHOSPHORYLATION [LARGE SCALE ANALYSIS] AT SER-2 AND SER-3</scope>
    <scope>IDENTIFICATION BY MASS SPECTROMETRY [LARGE SCALE ANALYSIS]</scope>
    <source>
        <strain>ADR376</strain>
    </source>
</reference>
<reference key="15">
    <citation type="journal article" date="2008" name="J. Cell Biol.">
        <title>P bodies promote stress granule assembly in Saccharomyces cerevisiae.</title>
        <authorList>
            <person name="Buchan J.R."/>
            <person name="Muhlrad D."/>
            <person name="Parker R."/>
        </authorList>
    </citation>
    <scope>SUBCELLULAR LOCATION</scope>
</reference>
<reference key="16">
    <citation type="journal article" date="2008" name="Mol. Cell. Proteomics">
        <title>A multidimensional chromatography technology for in-depth phosphoproteome analysis.</title>
        <authorList>
            <person name="Albuquerque C.P."/>
            <person name="Smolka M.B."/>
            <person name="Payne S.H."/>
            <person name="Bafna V."/>
            <person name="Eng J."/>
            <person name="Zhou H."/>
        </authorList>
    </citation>
    <scope>PHOSPHORYLATION [LARGE SCALE ANALYSIS] AT SER-2; SER-3; SER-206; THR-458 AND SER-462</scope>
    <scope>IDENTIFICATION BY MASS SPECTROMETRY [LARGE SCALE ANALYSIS]</scope>
</reference>
<reference key="17">
    <citation type="journal article" date="2009" name="Science">
        <title>Global analysis of Cdk1 substrate phosphorylation sites provides insights into evolution.</title>
        <authorList>
            <person name="Holt L.J."/>
            <person name="Tuch B.B."/>
            <person name="Villen J."/>
            <person name="Johnson A.D."/>
            <person name="Gygi S.P."/>
            <person name="Morgan D.O."/>
        </authorList>
    </citation>
    <scope>PHOSPHORYLATION [LARGE SCALE ANALYSIS] AT SER-2; SER-3 AND SER-462</scope>
    <scope>IDENTIFICATION BY MASS SPECTROMETRY [LARGE SCALE ANALYSIS]</scope>
</reference>
<reference key="18">
    <citation type="journal article" date="2013" name="Nat. Struct. Mol. Biol.">
        <title>Global analysis of yeast mRNPs.</title>
        <authorList>
            <person name="Mitchell S.F."/>
            <person name="Jain S."/>
            <person name="She M."/>
            <person name="Parker R."/>
        </authorList>
    </citation>
    <scope>SUBCELLULAR LOCATION</scope>
</reference>
<reference key="19">
    <citation type="journal article" date="2021" name="J. Proteome Res.">
        <title>Discovery of arginine methylation, phosphorylation, and their co-occurrence in condensate-associated proteins in Saccharomyces cerevisiae.</title>
        <authorList>
            <person name="Hamey J.J."/>
            <person name="Nguyen A."/>
            <person name="Wilkins M.R."/>
        </authorList>
    </citation>
    <scope>METHYLATION AT ARG-519</scope>
    <scope>PHOSPHORYLATION AT SER-2; SER-3; SER-51; SER-87; SER-460 AND SER-462</scope>
</reference>